<reference key="1">
    <citation type="journal article" date="2002" name="Environ. Microbiol.">
        <title>Complete genome sequence and comparative analysis of the metabolically versatile Pseudomonas putida KT2440.</title>
        <authorList>
            <person name="Nelson K.E."/>
            <person name="Weinel C."/>
            <person name="Paulsen I.T."/>
            <person name="Dodson R.J."/>
            <person name="Hilbert H."/>
            <person name="Martins dos Santos V.A.P."/>
            <person name="Fouts D.E."/>
            <person name="Gill S.R."/>
            <person name="Pop M."/>
            <person name="Holmes M."/>
            <person name="Brinkac L.M."/>
            <person name="Beanan M.J."/>
            <person name="DeBoy R.T."/>
            <person name="Daugherty S.C."/>
            <person name="Kolonay J.F."/>
            <person name="Madupu R."/>
            <person name="Nelson W.C."/>
            <person name="White O."/>
            <person name="Peterson J.D."/>
            <person name="Khouri H.M."/>
            <person name="Hance I."/>
            <person name="Chris Lee P."/>
            <person name="Holtzapple E.K."/>
            <person name="Scanlan D."/>
            <person name="Tran K."/>
            <person name="Moazzez A."/>
            <person name="Utterback T.R."/>
            <person name="Rizzo M."/>
            <person name="Lee K."/>
            <person name="Kosack D."/>
            <person name="Moestl D."/>
            <person name="Wedler H."/>
            <person name="Lauber J."/>
            <person name="Stjepandic D."/>
            <person name="Hoheisel J."/>
            <person name="Straetz M."/>
            <person name="Heim S."/>
            <person name="Kiewitz C."/>
            <person name="Eisen J.A."/>
            <person name="Timmis K.N."/>
            <person name="Duesterhoeft A."/>
            <person name="Tuemmler B."/>
            <person name="Fraser C.M."/>
        </authorList>
    </citation>
    <scope>NUCLEOTIDE SEQUENCE [LARGE SCALE GENOMIC DNA]</scope>
    <source>
        <strain>ATCC 47054 / DSM 6125 / CFBP 8728 / NCIMB 11950 / KT2440</strain>
    </source>
</reference>
<protein>
    <recommendedName>
        <fullName evidence="1">UDP-3-O-acyl-N-acetylglucosamine deacetylase</fullName>
        <shortName evidence="1">UDP-3-O-acyl-GlcNAc deacetylase</shortName>
        <ecNumber evidence="1">3.5.1.108</ecNumber>
    </recommendedName>
    <alternativeName>
        <fullName evidence="1">UDP-3-O-[R-3-hydroxymyristoyl]-N-acetylglucosamine deacetylase</fullName>
    </alternativeName>
</protein>
<comment type="function">
    <text evidence="1">Catalyzes the hydrolysis of UDP-3-O-myristoyl-N-acetylglucosamine to form UDP-3-O-myristoylglucosamine and acetate, the committed step in lipid A biosynthesis.</text>
</comment>
<comment type="catalytic activity">
    <reaction evidence="1">
        <text>a UDP-3-O-[(3R)-3-hydroxyacyl]-N-acetyl-alpha-D-glucosamine + H2O = a UDP-3-O-[(3R)-3-hydroxyacyl]-alpha-D-glucosamine + acetate</text>
        <dbReference type="Rhea" id="RHEA:67816"/>
        <dbReference type="ChEBI" id="CHEBI:15377"/>
        <dbReference type="ChEBI" id="CHEBI:30089"/>
        <dbReference type="ChEBI" id="CHEBI:137740"/>
        <dbReference type="ChEBI" id="CHEBI:173225"/>
        <dbReference type="EC" id="3.5.1.108"/>
    </reaction>
</comment>
<comment type="cofactor">
    <cofactor evidence="1">
        <name>Zn(2+)</name>
        <dbReference type="ChEBI" id="CHEBI:29105"/>
    </cofactor>
</comment>
<comment type="pathway">
    <text evidence="1">Glycolipid biosynthesis; lipid IV(A) biosynthesis; lipid IV(A) from (3R)-3-hydroxytetradecanoyl-[acyl-carrier-protein] and UDP-N-acetyl-alpha-D-glucosamine: step 2/6.</text>
</comment>
<comment type="similarity">
    <text evidence="1">Belongs to the LpxC family.</text>
</comment>
<feature type="chain" id="PRO_0000191946" description="UDP-3-O-acyl-N-acetylglucosamine deacetylase">
    <location>
        <begin position="1"/>
        <end position="303"/>
    </location>
</feature>
<feature type="active site" description="Proton donor" evidence="1">
    <location>
        <position position="264"/>
    </location>
</feature>
<feature type="binding site" evidence="1">
    <location>
        <position position="78"/>
    </location>
    <ligand>
        <name>Zn(2+)</name>
        <dbReference type="ChEBI" id="CHEBI:29105"/>
    </ligand>
</feature>
<feature type="binding site" evidence="1">
    <location>
        <position position="237"/>
    </location>
    <ligand>
        <name>Zn(2+)</name>
        <dbReference type="ChEBI" id="CHEBI:29105"/>
    </ligand>
</feature>
<feature type="binding site" evidence="1">
    <location>
        <position position="241"/>
    </location>
    <ligand>
        <name>Zn(2+)</name>
        <dbReference type="ChEBI" id="CHEBI:29105"/>
    </ligand>
</feature>
<keyword id="KW-0378">Hydrolase</keyword>
<keyword id="KW-0441">Lipid A biosynthesis</keyword>
<keyword id="KW-0444">Lipid biosynthesis</keyword>
<keyword id="KW-0443">Lipid metabolism</keyword>
<keyword id="KW-0479">Metal-binding</keyword>
<keyword id="KW-1185">Reference proteome</keyword>
<keyword id="KW-0862">Zinc</keyword>
<sequence>MIKQRTLKNTIRATGVGLHSGEKVYLTLKPAPVDTGIVFRRADLDPVVEIPARAANVGETTMSTTLVNGDVKVDTVEHLLSAMAGLGIDNAYVELSASEVPIMDGSAGPFVFLIQSAGLEEQDAAKKFIRILREVTVEEGDKRATFLPFEGFKVSFEIDFDHPVLRNRTQSASVDFSSTSFVKEVSRARTFGFMRDIEYLRKHNLALGGSVENAIVVDEDGVLNEDGLRYEDEFVKHKILDAIGDLYLLGNSLIGEFKGFKSGHALNNQLLRKLIAETDAWEVVTFEDASTAPISYMRPVAAV</sequence>
<organism>
    <name type="scientific">Pseudomonas putida (strain ATCC 47054 / DSM 6125 / CFBP 8728 / NCIMB 11950 / KT2440)</name>
    <dbReference type="NCBI Taxonomy" id="160488"/>
    <lineage>
        <taxon>Bacteria</taxon>
        <taxon>Pseudomonadati</taxon>
        <taxon>Pseudomonadota</taxon>
        <taxon>Gammaproteobacteria</taxon>
        <taxon>Pseudomonadales</taxon>
        <taxon>Pseudomonadaceae</taxon>
        <taxon>Pseudomonas</taxon>
    </lineage>
</organism>
<name>LPXC_PSEPK</name>
<gene>
    <name evidence="1" type="primary">lpxC</name>
    <name type="ordered locus">PP_1343</name>
</gene>
<dbReference type="EC" id="3.5.1.108" evidence="1"/>
<dbReference type="EMBL" id="AE015451">
    <property type="protein sequence ID" value="AAN66966.1"/>
    <property type="molecule type" value="Genomic_DNA"/>
</dbReference>
<dbReference type="RefSeq" id="NP_743502.1">
    <property type="nucleotide sequence ID" value="NC_002947.4"/>
</dbReference>
<dbReference type="RefSeq" id="WP_003251873.1">
    <property type="nucleotide sequence ID" value="NZ_CP169744.1"/>
</dbReference>
<dbReference type="SMR" id="Q88N71"/>
<dbReference type="STRING" id="160488.PP_1343"/>
<dbReference type="PaxDb" id="160488-PP_1343"/>
<dbReference type="GeneID" id="83682223"/>
<dbReference type="KEGG" id="ppu:PP_1343"/>
<dbReference type="PATRIC" id="fig|160488.4.peg.1422"/>
<dbReference type="eggNOG" id="COG0774">
    <property type="taxonomic scope" value="Bacteria"/>
</dbReference>
<dbReference type="HOGENOM" id="CLU_046528_1_0_6"/>
<dbReference type="OrthoDB" id="9802746at2"/>
<dbReference type="PhylomeDB" id="Q88N71"/>
<dbReference type="BioCyc" id="PPUT160488:G1G01-1431-MONOMER"/>
<dbReference type="UniPathway" id="UPA00359">
    <property type="reaction ID" value="UER00478"/>
</dbReference>
<dbReference type="Proteomes" id="UP000000556">
    <property type="component" value="Chromosome"/>
</dbReference>
<dbReference type="GO" id="GO:0016020">
    <property type="term" value="C:membrane"/>
    <property type="evidence" value="ECO:0007669"/>
    <property type="project" value="GOC"/>
</dbReference>
<dbReference type="GO" id="GO:0046872">
    <property type="term" value="F:metal ion binding"/>
    <property type="evidence" value="ECO:0007669"/>
    <property type="project" value="UniProtKB-KW"/>
</dbReference>
<dbReference type="GO" id="GO:0103117">
    <property type="term" value="F:UDP-3-O-acyl-N-acetylglucosamine deacetylase activity"/>
    <property type="evidence" value="ECO:0007669"/>
    <property type="project" value="UniProtKB-UniRule"/>
</dbReference>
<dbReference type="GO" id="GO:0009245">
    <property type="term" value="P:lipid A biosynthetic process"/>
    <property type="evidence" value="ECO:0007669"/>
    <property type="project" value="UniProtKB-UniRule"/>
</dbReference>
<dbReference type="FunFam" id="3.30.230.20:FF:000001">
    <property type="entry name" value="UDP-3-O-acyl-N-acetylglucosamine deacetylase"/>
    <property type="match status" value="1"/>
</dbReference>
<dbReference type="Gene3D" id="3.30.230.20">
    <property type="entry name" value="lpxc deacetylase, domain 1"/>
    <property type="match status" value="1"/>
</dbReference>
<dbReference type="Gene3D" id="3.30.1700.10">
    <property type="entry name" value="lpxc deacetylase, domain 2"/>
    <property type="match status" value="1"/>
</dbReference>
<dbReference type="HAMAP" id="MF_00388">
    <property type="entry name" value="LpxC"/>
    <property type="match status" value="1"/>
</dbReference>
<dbReference type="InterPro" id="IPR020568">
    <property type="entry name" value="Ribosomal_Su5_D2-typ_SF"/>
</dbReference>
<dbReference type="InterPro" id="IPR004463">
    <property type="entry name" value="UDP-acyl_GlcNac_deAcase"/>
</dbReference>
<dbReference type="InterPro" id="IPR011334">
    <property type="entry name" value="UDP-acyl_GlcNac_deAcase_C"/>
</dbReference>
<dbReference type="InterPro" id="IPR015870">
    <property type="entry name" value="UDP-acyl_N-AcGlcN_deAcase_N"/>
</dbReference>
<dbReference type="NCBIfam" id="TIGR00325">
    <property type="entry name" value="lpxC"/>
    <property type="match status" value="1"/>
</dbReference>
<dbReference type="PANTHER" id="PTHR33694">
    <property type="entry name" value="UDP-3-O-ACYL-N-ACETYLGLUCOSAMINE DEACETYLASE 1, MITOCHONDRIAL-RELATED"/>
    <property type="match status" value="1"/>
</dbReference>
<dbReference type="PANTHER" id="PTHR33694:SF1">
    <property type="entry name" value="UDP-3-O-ACYL-N-ACETYLGLUCOSAMINE DEACETYLASE 1, MITOCHONDRIAL-RELATED"/>
    <property type="match status" value="1"/>
</dbReference>
<dbReference type="Pfam" id="PF03331">
    <property type="entry name" value="LpxC"/>
    <property type="match status" value="1"/>
</dbReference>
<dbReference type="SUPFAM" id="SSF54211">
    <property type="entry name" value="Ribosomal protein S5 domain 2-like"/>
    <property type="match status" value="2"/>
</dbReference>
<proteinExistence type="inferred from homology"/>
<accession>Q88N71</accession>
<evidence type="ECO:0000255" key="1">
    <source>
        <dbReference type="HAMAP-Rule" id="MF_00388"/>
    </source>
</evidence>